<comment type="function">
    <text evidence="1">May be involved in the control of meiotic sister-chromatid recombination.</text>
</comment>
<comment type="subcellular location">
    <subcellularLocation>
        <location evidence="1">Mitochondrion</location>
    </subcellularLocation>
</comment>
<feature type="transit peptide" description="Mitochondrion" evidence="2">
    <location>
        <begin position="1"/>
        <end position="29"/>
    </location>
</feature>
<feature type="chain" id="PRO_0000043074" description="Meiotic sister-chromatid recombination protein 6, mitochondrial">
    <location>
        <begin position="30"/>
        <end position="709"/>
    </location>
</feature>
<proteinExistence type="inferred from homology"/>
<keyword id="KW-0233">DNA recombination</keyword>
<keyword id="KW-0469">Meiosis</keyword>
<keyword id="KW-0496">Mitochondrion</keyword>
<keyword id="KW-1185">Reference proteome</keyword>
<keyword id="KW-0809">Transit peptide</keyword>
<dbReference type="EMBL" id="CR380950">
    <property type="protein sequence ID" value="CAG58426.1"/>
    <property type="molecule type" value="Genomic_DNA"/>
</dbReference>
<dbReference type="RefSeq" id="XP_445515.1">
    <property type="nucleotide sequence ID" value="XM_445515.1"/>
</dbReference>
<dbReference type="FunCoup" id="Q6FW79">
    <property type="interactions" value="87"/>
</dbReference>
<dbReference type="EnsemblFungi" id="CAGL0D02310g-T">
    <property type="protein sequence ID" value="CAGL0D02310g-T-p1"/>
    <property type="gene ID" value="CAGL0D02310g"/>
</dbReference>
<dbReference type="KEGG" id="cgr:2887056"/>
<dbReference type="CGD" id="CAL0128399">
    <property type="gene designation" value="CAGL0D02310g"/>
</dbReference>
<dbReference type="VEuPathDB" id="FungiDB:CAGL0D02310g"/>
<dbReference type="eggNOG" id="ENOG502QW5R">
    <property type="taxonomic scope" value="Eukaryota"/>
</dbReference>
<dbReference type="HOGENOM" id="CLU_398067_0_0_1"/>
<dbReference type="InParanoid" id="Q6FW79"/>
<dbReference type="OMA" id="WVKYLET"/>
<dbReference type="Proteomes" id="UP000002428">
    <property type="component" value="Chromosome D"/>
</dbReference>
<dbReference type="GO" id="GO:0005739">
    <property type="term" value="C:mitochondrion"/>
    <property type="evidence" value="ECO:0007669"/>
    <property type="project" value="UniProtKB-SubCell"/>
</dbReference>
<dbReference type="GO" id="GO:0006310">
    <property type="term" value="P:DNA recombination"/>
    <property type="evidence" value="ECO:0007669"/>
    <property type="project" value="UniProtKB-KW"/>
</dbReference>
<dbReference type="GO" id="GO:0051321">
    <property type="term" value="P:meiotic cell cycle"/>
    <property type="evidence" value="ECO:0007669"/>
    <property type="project" value="UniProtKB-KW"/>
</dbReference>
<sequence>MLRINQRLLVRSLRDAQYQYLKSTALRFLSSSTQSNVETTPRRSGRLFELNKEYTGKLAQPDGKANIESLYNEFKNDLDKISEFSNGRQGMAPKYGRSRSLSFINRLFQSITNAKNTSSLDPYVVLEQLSKYNLIGPAQYEMILRYYLLVKDAPKDVISLWVKYLEQFTTSNENLMAYTTIAYLKLPDMNEPDCSMLQQILQTERFHTDIPFGRIISIVEQNEVLKRDQELSNRFAYLLNLYATQNKTWFINQLDICYTESRLRSFYNIYSAQRDINNCDIEIITKFMEQFNKLNANSSFPMQVFNEYKDKLSDADGFKLKLGLLDIVSKYPAPSKIQKLQRLLAVWNSYLKPEFGKVGIDASLAYASLIKALNTSGNIEELQNIWEKEIPTEYKNNQVVFEAFLLAIIRRTKITYSQIQNRIDATKFGKLKSVDLAEAIALKIFNENPNDSKVFDDFYQQNSLDSFGSNTSILALKTYGDYIYKTKTDDETYVIANDVRSKVLKLKPQISTQSWKQEVNLILEKFIDIAPSIIPVRVLFEQRGIYQLNFTLQKKILFSEFRKPDGDVQNAEKIFEELMKTDNNKVSQPMRINSPQLMGTMIKGLCQVIGRTHDVSLYPELSKYLEMLPGLEVHMSINWMEQVLRTIRMVFRSGSTKTIPKELLEFSEFIIEKLPAIDPDFNYQFRNDDIAMFKKIGAKSFSKLKSTST</sequence>
<reference key="1">
    <citation type="journal article" date="2004" name="Nature">
        <title>Genome evolution in yeasts.</title>
        <authorList>
            <person name="Dujon B."/>
            <person name="Sherman D."/>
            <person name="Fischer G."/>
            <person name="Durrens P."/>
            <person name="Casaregola S."/>
            <person name="Lafontaine I."/>
            <person name="de Montigny J."/>
            <person name="Marck C."/>
            <person name="Neuveglise C."/>
            <person name="Talla E."/>
            <person name="Goffard N."/>
            <person name="Frangeul L."/>
            <person name="Aigle M."/>
            <person name="Anthouard V."/>
            <person name="Babour A."/>
            <person name="Barbe V."/>
            <person name="Barnay S."/>
            <person name="Blanchin S."/>
            <person name="Beckerich J.-M."/>
            <person name="Beyne E."/>
            <person name="Bleykasten C."/>
            <person name="Boisrame A."/>
            <person name="Boyer J."/>
            <person name="Cattolico L."/>
            <person name="Confanioleri F."/>
            <person name="de Daruvar A."/>
            <person name="Despons L."/>
            <person name="Fabre E."/>
            <person name="Fairhead C."/>
            <person name="Ferry-Dumazet H."/>
            <person name="Groppi A."/>
            <person name="Hantraye F."/>
            <person name="Hennequin C."/>
            <person name="Jauniaux N."/>
            <person name="Joyet P."/>
            <person name="Kachouri R."/>
            <person name="Kerrest A."/>
            <person name="Koszul R."/>
            <person name="Lemaire M."/>
            <person name="Lesur I."/>
            <person name="Ma L."/>
            <person name="Muller H."/>
            <person name="Nicaud J.-M."/>
            <person name="Nikolski M."/>
            <person name="Oztas S."/>
            <person name="Ozier-Kalogeropoulos O."/>
            <person name="Pellenz S."/>
            <person name="Potier S."/>
            <person name="Richard G.-F."/>
            <person name="Straub M.-L."/>
            <person name="Suleau A."/>
            <person name="Swennen D."/>
            <person name="Tekaia F."/>
            <person name="Wesolowski-Louvel M."/>
            <person name="Westhof E."/>
            <person name="Wirth B."/>
            <person name="Zeniou-Meyer M."/>
            <person name="Zivanovic Y."/>
            <person name="Bolotin-Fukuhara M."/>
            <person name="Thierry A."/>
            <person name="Bouchier C."/>
            <person name="Caudron B."/>
            <person name="Scarpelli C."/>
            <person name="Gaillardin C."/>
            <person name="Weissenbach J."/>
            <person name="Wincker P."/>
            <person name="Souciet J.-L."/>
        </authorList>
    </citation>
    <scope>NUCLEOTIDE SEQUENCE [LARGE SCALE GENOMIC DNA]</scope>
    <source>
        <strain>ATCC 2001 / BCRC 20586 / JCM 3761 / NBRC 0622 / NRRL Y-65 / CBS 138</strain>
    </source>
</reference>
<name>MSC6_CANGA</name>
<organism>
    <name type="scientific">Candida glabrata (strain ATCC 2001 / BCRC 20586 / JCM 3761 / NBRC 0622 / NRRL Y-65 / CBS 138)</name>
    <name type="common">Yeast</name>
    <name type="synonym">Nakaseomyces glabratus</name>
    <dbReference type="NCBI Taxonomy" id="284593"/>
    <lineage>
        <taxon>Eukaryota</taxon>
        <taxon>Fungi</taxon>
        <taxon>Dikarya</taxon>
        <taxon>Ascomycota</taxon>
        <taxon>Saccharomycotina</taxon>
        <taxon>Saccharomycetes</taxon>
        <taxon>Saccharomycetales</taxon>
        <taxon>Saccharomycetaceae</taxon>
        <taxon>Nakaseomyces</taxon>
    </lineage>
</organism>
<gene>
    <name type="primary">MSC6</name>
    <name type="ordered locus">CAGL0D02310g</name>
</gene>
<accession>Q6FW79</accession>
<protein>
    <recommendedName>
        <fullName>Meiotic sister-chromatid recombination protein 6, mitochondrial</fullName>
    </recommendedName>
</protein>
<evidence type="ECO:0000250" key="1"/>
<evidence type="ECO:0000255" key="2"/>